<feature type="chain" id="PRO_0000127669" description="Uncharacterized protein T02E1.7">
    <location>
        <begin position="1"/>
        <end position="269"/>
    </location>
</feature>
<feature type="transmembrane region" description="Helical" evidence="2">
    <location>
        <begin position="65"/>
        <end position="85"/>
    </location>
</feature>
<feature type="transmembrane region" description="Helical" evidence="2">
    <location>
        <begin position="156"/>
        <end position="176"/>
    </location>
</feature>
<feature type="transmembrane region" description="Helical" evidence="2">
    <location>
        <begin position="182"/>
        <end position="202"/>
    </location>
</feature>
<feature type="transmembrane region" description="Helical" evidence="2">
    <location>
        <begin position="206"/>
        <end position="226"/>
    </location>
</feature>
<feature type="transmembrane region" description="Helical" evidence="2">
    <location>
        <begin position="242"/>
        <end position="262"/>
    </location>
</feature>
<feature type="short sequence motif" description="Di-lysine motif" evidence="2">
    <location>
        <begin position="266"/>
        <end position="269"/>
    </location>
</feature>
<keyword id="KW-0472">Membrane</keyword>
<keyword id="KW-1185">Reference proteome</keyword>
<keyword id="KW-0812">Transmembrane</keyword>
<keyword id="KW-1133">Transmembrane helix</keyword>
<sequence>MDINVVITRCEDYTETLARNTRKVLPTIGRLLLISTFVEDGLRLLFNTHDHVNHFSYNWGLNYHFSLFLTIVMIINLLFGSLFVMMRYKVTESSAVLGFTIFAQVILYQLYTTYHLLTRNISIVAAIMLLVAENMLRKPKPANYTQLPRDEHEIEVTSVLLAACRVCLNLMLISMVHFDMSYTRILLCIISYGMMIFVWLGFKTRMMSFMLATWLFAYNIVLNDFWNKDAELHIIRYDFFQTLSAIGGLLLLIHTGPGEFSFDELKKKW</sequence>
<evidence type="ECO:0000250" key="1">
    <source>
        <dbReference type="UniProtKB" id="O15260"/>
    </source>
</evidence>
<evidence type="ECO:0000255" key="2"/>
<evidence type="ECO:0000305" key="3"/>
<comment type="subcellular location">
    <subcellularLocation>
        <location evidence="3">Membrane</location>
        <topology evidence="3">Multi-pass membrane protein</topology>
    </subcellularLocation>
</comment>
<comment type="domain">
    <text evidence="1">The di-lysine motif confers endoplasmic reticulum localization for type I membrane proteins.</text>
</comment>
<comment type="similarity">
    <text evidence="3">Belongs to the SURF4 family.</text>
</comment>
<name>YFC7_CAEEL</name>
<reference key="1">
    <citation type="journal article" date="1998" name="Science">
        <title>Genome sequence of the nematode C. elegans: a platform for investigating biology.</title>
        <authorList>
            <consortium name="The C. elegans sequencing consortium"/>
        </authorList>
    </citation>
    <scope>NUCLEOTIDE SEQUENCE [LARGE SCALE GENOMIC DNA]</scope>
    <source>
        <strain>Bristol N2</strain>
    </source>
</reference>
<protein>
    <recommendedName>
        <fullName>Uncharacterized protein T02E1.7</fullName>
    </recommendedName>
</protein>
<gene>
    <name type="ORF">T02E1.7</name>
</gene>
<organism>
    <name type="scientific">Caenorhabditis elegans</name>
    <dbReference type="NCBI Taxonomy" id="6239"/>
    <lineage>
        <taxon>Eukaryota</taxon>
        <taxon>Metazoa</taxon>
        <taxon>Ecdysozoa</taxon>
        <taxon>Nematoda</taxon>
        <taxon>Chromadorea</taxon>
        <taxon>Rhabditida</taxon>
        <taxon>Rhabditina</taxon>
        <taxon>Rhabditomorpha</taxon>
        <taxon>Rhabditoidea</taxon>
        <taxon>Rhabditidae</taxon>
        <taxon>Peloderinae</taxon>
        <taxon>Caenorhabditis</taxon>
    </lineage>
</organism>
<dbReference type="EMBL" id="Z81581">
    <property type="protein sequence ID" value="CAB04659.1"/>
    <property type="molecule type" value="Genomic_DNA"/>
</dbReference>
<dbReference type="PIR" id="T24358">
    <property type="entry name" value="T24358"/>
</dbReference>
<dbReference type="RefSeq" id="NP_492235.1">
    <property type="nucleotide sequence ID" value="NM_059834.4"/>
</dbReference>
<dbReference type="BioGRID" id="52664">
    <property type="interactions" value="1"/>
</dbReference>
<dbReference type="FunCoup" id="O45731">
    <property type="interactions" value="2"/>
</dbReference>
<dbReference type="STRING" id="6239.T02E1.7.1"/>
<dbReference type="PaxDb" id="6239-T02E1.7"/>
<dbReference type="EnsemblMetazoa" id="T02E1.7.1">
    <property type="protein sequence ID" value="T02E1.7.1"/>
    <property type="gene ID" value="WBGene00011379"/>
</dbReference>
<dbReference type="GeneID" id="187988"/>
<dbReference type="KEGG" id="cel:CELE_T02E1.7"/>
<dbReference type="UCSC" id="T02E1.7">
    <property type="organism name" value="c. elegans"/>
</dbReference>
<dbReference type="AGR" id="WB:WBGene00011379"/>
<dbReference type="CTD" id="187988"/>
<dbReference type="WormBase" id="T02E1.7">
    <property type="protein sequence ID" value="CE13058"/>
    <property type="gene ID" value="WBGene00011379"/>
</dbReference>
<dbReference type="eggNOG" id="KOG3998">
    <property type="taxonomic scope" value="Eukaryota"/>
</dbReference>
<dbReference type="GeneTree" id="ENSGT00530000064123"/>
<dbReference type="HOGENOM" id="CLU_056195_0_0_1"/>
<dbReference type="InParanoid" id="O45731"/>
<dbReference type="OMA" id="RTRQCAI"/>
<dbReference type="OrthoDB" id="7859621at2759"/>
<dbReference type="PhylomeDB" id="O45731"/>
<dbReference type="PRO" id="PR:O45731"/>
<dbReference type="Proteomes" id="UP000001940">
    <property type="component" value="Chromosome I"/>
</dbReference>
<dbReference type="Bgee" id="WBGene00011379">
    <property type="expression patterns" value="Expressed in larva and 1 other cell type or tissue"/>
</dbReference>
<dbReference type="GO" id="GO:0005783">
    <property type="term" value="C:endoplasmic reticulum"/>
    <property type="evidence" value="ECO:0000318"/>
    <property type="project" value="GO_Central"/>
</dbReference>
<dbReference type="GO" id="GO:0005793">
    <property type="term" value="C:endoplasmic reticulum-Golgi intermediate compartment"/>
    <property type="evidence" value="ECO:0000318"/>
    <property type="project" value="GO_Central"/>
</dbReference>
<dbReference type="GO" id="GO:0016020">
    <property type="term" value="C:membrane"/>
    <property type="evidence" value="ECO:0007669"/>
    <property type="project" value="UniProtKB-SubCell"/>
</dbReference>
<dbReference type="GO" id="GO:0007030">
    <property type="term" value="P:Golgi organization"/>
    <property type="evidence" value="ECO:0000318"/>
    <property type="project" value="GO_Central"/>
</dbReference>
<dbReference type="InterPro" id="IPR002995">
    <property type="entry name" value="Surf4"/>
</dbReference>
<dbReference type="Pfam" id="PF02077">
    <property type="entry name" value="SURF4"/>
    <property type="match status" value="1"/>
</dbReference>
<dbReference type="PROSITE" id="PS01339">
    <property type="entry name" value="SURF4"/>
    <property type="match status" value="1"/>
</dbReference>
<proteinExistence type="inferred from homology"/>
<accession>O45731</accession>